<accession>B2HSN6</accession>
<gene>
    <name evidence="1" type="primary">rplV</name>
    <name type="ordered locus">MMAR_1036</name>
</gene>
<name>RL22_MYCMM</name>
<keyword id="KW-1185">Reference proteome</keyword>
<keyword id="KW-0687">Ribonucleoprotein</keyword>
<keyword id="KW-0689">Ribosomal protein</keyword>
<keyword id="KW-0694">RNA-binding</keyword>
<keyword id="KW-0699">rRNA-binding</keyword>
<reference key="1">
    <citation type="journal article" date="2008" name="Genome Res.">
        <title>Insights from the complete genome sequence of Mycobacterium marinum on the evolution of Mycobacterium tuberculosis.</title>
        <authorList>
            <person name="Stinear T.P."/>
            <person name="Seemann T."/>
            <person name="Harrison P.F."/>
            <person name="Jenkin G.A."/>
            <person name="Davies J.K."/>
            <person name="Johnson P.D."/>
            <person name="Abdellah Z."/>
            <person name="Arrowsmith C."/>
            <person name="Chillingworth T."/>
            <person name="Churcher C."/>
            <person name="Clarke K."/>
            <person name="Cronin A."/>
            <person name="Davis P."/>
            <person name="Goodhead I."/>
            <person name="Holroyd N."/>
            <person name="Jagels K."/>
            <person name="Lord A."/>
            <person name="Moule S."/>
            <person name="Mungall K."/>
            <person name="Norbertczak H."/>
            <person name="Quail M.A."/>
            <person name="Rabbinowitsch E."/>
            <person name="Walker D."/>
            <person name="White B."/>
            <person name="Whitehead S."/>
            <person name="Small P.L."/>
            <person name="Brosch R."/>
            <person name="Ramakrishnan L."/>
            <person name="Fischbach M.A."/>
            <person name="Parkhill J."/>
            <person name="Cole S.T."/>
        </authorList>
    </citation>
    <scope>NUCLEOTIDE SEQUENCE [LARGE SCALE GENOMIC DNA]</scope>
    <source>
        <strain>ATCC BAA-535 / M</strain>
    </source>
</reference>
<proteinExistence type="inferred from homology"/>
<organism>
    <name type="scientific">Mycobacterium marinum (strain ATCC BAA-535 / M)</name>
    <dbReference type="NCBI Taxonomy" id="216594"/>
    <lineage>
        <taxon>Bacteria</taxon>
        <taxon>Bacillati</taxon>
        <taxon>Actinomycetota</taxon>
        <taxon>Actinomycetes</taxon>
        <taxon>Mycobacteriales</taxon>
        <taxon>Mycobacteriaceae</taxon>
        <taxon>Mycobacterium</taxon>
        <taxon>Mycobacterium ulcerans group</taxon>
    </lineage>
</organism>
<sequence>MTTTTEFPSATAKARFVRVSPRKARRVIDLVRGRSVSDALDILRWAPQAASEPVAKVIASAAANAQNNNGLDPATLIVATVYADEGPTAKRIRPRAQGRAFRIRKRTSHITVVVESRPSKDQRSSKSSRARRAEGSKAAATAPAKKSSASKAPAKKAATKAESKTSETSEAKGGSD</sequence>
<feature type="chain" id="PRO_0000354488" description="Large ribosomal subunit protein uL22">
    <location>
        <begin position="1"/>
        <end position="176"/>
    </location>
</feature>
<feature type="region of interest" description="Disordered" evidence="2">
    <location>
        <begin position="113"/>
        <end position="176"/>
    </location>
</feature>
<feature type="compositionally biased region" description="Low complexity" evidence="2">
    <location>
        <begin position="136"/>
        <end position="152"/>
    </location>
</feature>
<feature type="compositionally biased region" description="Basic and acidic residues" evidence="2">
    <location>
        <begin position="159"/>
        <end position="176"/>
    </location>
</feature>
<protein>
    <recommendedName>
        <fullName evidence="1">Large ribosomal subunit protein uL22</fullName>
    </recommendedName>
    <alternativeName>
        <fullName evidence="3">50S ribosomal protein L22</fullName>
    </alternativeName>
</protein>
<comment type="function">
    <text evidence="1">This protein binds specifically to 23S rRNA; its binding is stimulated by other ribosomal proteins, e.g. L4, L17, and L20. It is important during the early stages of 50S assembly. It makes multiple contacts with different domains of the 23S rRNA in the assembled 50S subunit and ribosome (By similarity).</text>
</comment>
<comment type="function">
    <text evidence="1">The globular domain of the protein is located near the polypeptide exit tunnel on the outside of the subunit, while an extended beta-hairpin is found that lines the wall of the exit tunnel in the center of the 70S ribosome.</text>
</comment>
<comment type="subunit">
    <text evidence="1">Part of the 50S ribosomal subunit.</text>
</comment>
<comment type="similarity">
    <text evidence="1">Belongs to the universal ribosomal protein uL22 family.</text>
</comment>
<dbReference type="EMBL" id="CP000854">
    <property type="protein sequence ID" value="ACC39494.1"/>
    <property type="molecule type" value="Genomic_DNA"/>
</dbReference>
<dbReference type="RefSeq" id="WP_012392942.1">
    <property type="nucleotide sequence ID" value="NC_010612.1"/>
</dbReference>
<dbReference type="SMR" id="B2HSN6"/>
<dbReference type="STRING" id="216594.MMAR_1036"/>
<dbReference type="GeneID" id="93438595"/>
<dbReference type="KEGG" id="mmi:MMAR_1036"/>
<dbReference type="eggNOG" id="COG0091">
    <property type="taxonomic scope" value="Bacteria"/>
</dbReference>
<dbReference type="HOGENOM" id="CLU_083987_1_0_11"/>
<dbReference type="OrthoDB" id="9805969at2"/>
<dbReference type="Proteomes" id="UP000001190">
    <property type="component" value="Chromosome"/>
</dbReference>
<dbReference type="GO" id="GO:0022625">
    <property type="term" value="C:cytosolic large ribosomal subunit"/>
    <property type="evidence" value="ECO:0007669"/>
    <property type="project" value="TreeGrafter"/>
</dbReference>
<dbReference type="GO" id="GO:0019843">
    <property type="term" value="F:rRNA binding"/>
    <property type="evidence" value="ECO:0007669"/>
    <property type="project" value="UniProtKB-UniRule"/>
</dbReference>
<dbReference type="GO" id="GO:0003735">
    <property type="term" value="F:structural constituent of ribosome"/>
    <property type="evidence" value="ECO:0007669"/>
    <property type="project" value="InterPro"/>
</dbReference>
<dbReference type="GO" id="GO:0006412">
    <property type="term" value="P:translation"/>
    <property type="evidence" value="ECO:0007669"/>
    <property type="project" value="UniProtKB-UniRule"/>
</dbReference>
<dbReference type="CDD" id="cd00336">
    <property type="entry name" value="Ribosomal_L22"/>
    <property type="match status" value="1"/>
</dbReference>
<dbReference type="FunFam" id="3.90.470.10:FF:000002">
    <property type="entry name" value="50S ribosomal protein L22"/>
    <property type="match status" value="1"/>
</dbReference>
<dbReference type="Gene3D" id="3.90.470.10">
    <property type="entry name" value="Ribosomal protein L22/L17"/>
    <property type="match status" value="1"/>
</dbReference>
<dbReference type="HAMAP" id="MF_01331_B">
    <property type="entry name" value="Ribosomal_uL22_B"/>
    <property type="match status" value="1"/>
</dbReference>
<dbReference type="InterPro" id="IPR001063">
    <property type="entry name" value="Ribosomal_uL22"/>
</dbReference>
<dbReference type="InterPro" id="IPR005727">
    <property type="entry name" value="Ribosomal_uL22_bac/chlpt-type"/>
</dbReference>
<dbReference type="InterPro" id="IPR047867">
    <property type="entry name" value="Ribosomal_uL22_bac/org-type"/>
</dbReference>
<dbReference type="InterPro" id="IPR018260">
    <property type="entry name" value="Ribosomal_uL22_CS"/>
</dbReference>
<dbReference type="InterPro" id="IPR036394">
    <property type="entry name" value="Ribosomal_uL22_sf"/>
</dbReference>
<dbReference type="NCBIfam" id="TIGR01044">
    <property type="entry name" value="rplV_bact"/>
    <property type="match status" value="1"/>
</dbReference>
<dbReference type="PANTHER" id="PTHR13501">
    <property type="entry name" value="CHLOROPLAST 50S RIBOSOMAL PROTEIN L22-RELATED"/>
    <property type="match status" value="1"/>
</dbReference>
<dbReference type="PANTHER" id="PTHR13501:SF8">
    <property type="entry name" value="LARGE RIBOSOMAL SUBUNIT PROTEIN UL22M"/>
    <property type="match status" value="1"/>
</dbReference>
<dbReference type="Pfam" id="PF00237">
    <property type="entry name" value="Ribosomal_L22"/>
    <property type="match status" value="1"/>
</dbReference>
<dbReference type="SUPFAM" id="SSF54843">
    <property type="entry name" value="Ribosomal protein L22"/>
    <property type="match status" value="1"/>
</dbReference>
<dbReference type="PROSITE" id="PS00464">
    <property type="entry name" value="RIBOSOMAL_L22"/>
    <property type="match status" value="1"/>
</dbReference>
<evidence type="ECO:0000255" key="1">
    <source>
        <dbReference type="HAMAP-Rule" id="MF_01331"/>
    </source>
</evidence>
<evidence type="ECO:0000256" key="2">
    <source>
        <dbReference type="SAM" id="MobiDB-lite"/>
    </source>
</evidence>
<evidence type="ECO:0000305" key="3"/>